<name>DCX_DICDI</name>
<protein>
    <recommendedName>
        <fullName>Protein doublecortin</fullName>
        <shortName>DdDCX</shortName>
    </recommendedName>
</protein>
<dbReference type="EMBL" id="AAFI02000019">
    <property type="protein sequence ID" value="EAL69059.1"/>
    <property type="molecule type" value="Genomic_DNA"/>
</dbReference>
<dbReference type="RefSeq" id="XP_642976.1">
    <property type="nucleotide sequence ID" value="XM_637884.1"/>
</dbReference>
<dbReference type="SMR" id="Q550F6"/>
<dbReference type="STRING" id="44689.Q550F6"/>
<dbReference type="GlyGen" id="Q550F6">
    <property type="glycosylation" value="3 sites"/>
</dbReference>
<dbReference type="PaxDb" id="44689-DDB0233528"/>
<dbReference type="EnsemblProtists" id="EAL69059">
    <property type="protein sequence ID" value="EAL69059"/>
    <property type="gene ID" value="DDB_G0277115"/>
</dbReference>
<dbReference type="GeneID" id="8620848"/>
<dbReference type="KEGG" id="ddi:DDB_G0277115"/>
<dbReference type="dictyBase" id="DDB_G0277115">
    <property type="gene designation" value="dcx"/>
</dbReference>
<dbReference type="VEuPathDB" id="AmoebaDB:DDB_G0277115"/>
<dbReference type="eggNOG" id="KOG3757">
    <property type="taxonomic scope" value="Eukaryota"/>
</dbReference>
<dbReference type="HOGENOM" id="CLU_035041_2_1_1"/>
<dbReference type="InParanoid" id="Q550F6"/>
<dbReference type="OMA" id="YICCGGE"/>
<dbReference type="PRO" id="PR:Q550F6"/>
<dbReference type="Proteomes" id="UP000002195">
    <property type="component" value="Chromosome 2"/>
</dbReference>
<dbReference type="GO" id="GO:0030864">
    <property type="term" value="C:cortical actin cytoskeleton"/>
    <property type="evidence" value="ECO:0000314"/>
    <property type="project" value="dictyBase"/>
</dbReference>
<dbReference type="GO" id="GO:0005874">
    <property type="term" value="C:microtubule"/>
    <property type="evidence" value="ECO:0000314"/>
    <property type="project" value="dictyBase"/>
</dbReference>
<dbReference type="GO" id="GO:0005815">
    <property type="term" value="C:microtubule organizing center"/>
    <property type="evidence" value="ECO:0000314"/>
    <property type="project" value="dictyBase"/>
</dbReference>
<dbReference type="GO" id="GO:0140582">
    <property type="term" value="P:adenylate cyclase-activating G protein-coupled cAMP receptor signaling pathway"/>
    <property type="evidence" value="ECO:0000316"/>
    <property type="project" value="dictyBase"/>
</dbReference>
<dbReference type="GO" id="GO:0035556">
    <property type="term" value="P:intracellular signal transduction"/>
    <property type="evidence" value="ECO:0007669"/>
    <property type="project" value="InterPro"/>
</dbReference>
<dbReference type="CDD" id="cd01617">
    <property type="entry name" value="DCX"/>
    <property type="match status" value="2"/>
</dbReference>
<dbReference type="FunFam" id="3.10.20.230:FF:000026">
    <property type="entry name" value="Protein doublecortin"/>
    <property type="match status" value="2"/>
</dbReference>
<dbReference type="Gene3D" id="3.10.20.230">
    <property type="entry name" value="Doublecortin domain"/>
    <property type="match status" value="2"/>
</dbReference>
<dbReference type="InterPro" id="IPR003533">
    <property type="entry name" value="Doublecortin_dom"/>
</dbReference>
<dbReference type="InterPro" id="IPR036572">
    <property type="entry name" value="Doublecortin_dom_sf"/>
</dbReference>
<dbReference type="PANTHER" id="PTHR23004">
    <property type="entry name" value="DOUBLECORTIN DOMAIN CONTAINING 2"/>
    <property type="match status" value="1"/>
</dbReference>
<dbReference type="PANTHER" id="PTHR23004:SF11">
    <property type="entry name" value="PROTEIN RPI-1"/>
    <property type="match status" value="1"/>
</dbReference>
<dbReference type="Pfam" id="PF03607">
    <property type="entry name" value="DCX"/>
    <property type="match status" value="2"/>
</dbReference>
<dbReference type="SMART" id="SM00537">
    <property type="entry name" value="DCX"/>
    <property type="match status" value="2"/>
</dbReference>
<dbReference type="SUPFAM" id="SSF89837">
    <property type="entry name" value="Doublecortin (DC)"/>
    <property type="match status" value="2"/>
</dbReference>
<dbReference type="PROSITE" id="PS50309">
    <property type="entry name" value="DC"/>
    <property type="match status" value="2"/>
</dbReference>
<comment type="function">
    <text evidence="3">Has a cytoskeleton-independent function in chemotactic signaling during development.</text>
</comment>
<comment type="subunit">
    <text evidence="3">Interacts with lis1.</text>
</comment>
<comment type="subcellular location">
    <subcellularLocation>
        <location evidence="3">Cytoplasm</location>
        <location evidence="3">Cytoskeleton</location>
    </subcellularLocation>
    <text>Associated with microtubules and actin.</text>
</comment>
<organism>
    <name type="scientific">Dictyostelium discoideum</name>
    <name type="common">Social amoeba</name>
    <dbReference type="NCBI Taxonomy" id="44689"/>
    <lineage>
        <taxon>Eukaryota</taxon>
        <taxon>Amoebozoa</taxon>
        <taxon>Evosea</taxon>
        <taxon>Eumycetozoa</taxon>
        <taxon>Dictyostelia</taxon>
        <taxon>Dictyosteliales</taxon>
        <taxon>Dictyosteliaceae</taxon>
        <taxon>Dictyostelium</taxon>
    </lineage>
</organism>
<accession>Q550F6</accession>
<gene>
    <name type="primary">dcx</name>
    <name type="ORF">DDB_0217917</name>
    <name type="ORF">DDB_G0277115</name>
</gene>
<evidence type="ECO:0000255" key="1">
    <source>
        <dbReference type="PROSITE-ProRule" id="PRU00072"/>
    </source>
</evidence>
<evidence type="ECO:0000256" key="2">
    <source>
        <dbReference type="SAM" id="MobiDB-lite"/>
    </source>
</evidence>
<evidence type="ECO:0000269" key="3">
    <source>
    </source>
</evidence>
<sequence>MTSTSGKPKMEKFGLQTDKSARVILFRNGDRYHVEGVHCLVHSSKFKTFDQLKLEFSKKVGLFTGNVQKVYSMDKKRIQDIKDFVDGHHYICCGAEPLNTEVIPKGIQDIFGKAEVSDQDDEPKPSKPFVSSVPPPPTPTPTSSSGTTTTSQPTLSASPSVSSAQSPKKPVVSAYKESAVHSIDKFSVQTEKAKVIMCFRNGDRYHSGERVTVHSTKFKTYDQLKEQLSKQVKLPTGPVRKLYLASSGKLVKTMEEIIDGEYYVCAGGETLNPLDFSPTLSEHVKQKKLQEQQQQASEQQKPQEQEIF</sequence>
<reference key="1">
    <citation type="journal article" date="2002" name="Nature">
        <title>Sequence and analysis of chromosome 2 of Dictyostelium discoideum.</title>
        <authorList>
            <person name="Gloeckner G."/>
            <person name="Eichinger L."/>
            <person name="Szafranski K."/>
            <person name="Pachebat J.A."/>
            <person name="Bankier A.T."/>
            <person name="Dear P.H."/>
            <person name="Lehmann R."/>
            <person name="Baumgart C."/>
            <person name="Parra G."/>
            <person name="Abril J.F."/>
            <person name="Guigo R."/>
            <person name="Kumpf K."/>
            <person name="Tunggal B."/>
            <person name="Cox E.C."/>
            <person name="Quail M.A."/>
            <person name="Platzer M."/>
            <person name="Rosenthal A."/>
            <person name="Noegel A.A."/>
        </authorList>
    </citation>
    <scope>NUCLEOTIDE SEQUENCE [LARGE SCALE GENOMIC DNA]</scope>
    <source>
        <strain>AX4</strain>
    </source>
</reference>
<reference key="2">
    <citation type="journal article" date="2005" name="Nature">
        <title>The genome of the social amoeba Dictyostelium discoideum.</title>
        <authorList>
            <person name="Eichinger L."/>
            <person name="Pachebat J.A."/>
            <person name="Gloeckner G."/>
            <person name="Rajandream M.A."/>
            <person name="Sucgang R."/>
            <person name="Berriman M."/>
            <person name="Song J."/>
            <person name="Olsen R."/>
            <person name="Szafranski K."/>
            <person name="Xu Q."/>
            <person name="Tunggal B."/>
            <person name="Kummerfeld S."/>
            <person name="Madera M."/>
            <person name="Konfortov B.A."/>
            <person name="Rivero F."/>
            <person name="Bankier A.T."/>
            <person name="Lehmann R."/>
            <person name="Hamlin N."/>
            <person name="Davies R."/>
            <person name="Gaudet P."/>
            <person name="Fey P."/>
            <person name="Pilcher K."/>
            <person name="Chen G."/>
            <person name="Saunders D."/>
            <person name="Sodergren E.J."/>
            <person name="Davis P."/>
            <person name="Kerhornou A."/>
            <person name="Nie X."/>
            <person name="Hall N."/>
            <person name="Anjard C."/>
            <person name="Hemphill L."/>
            <person name="Bason N."/>
            <person name="Farbrother P."/>
            <person name="Desany B."/>
            <person name="Just E."/>
            <person name="Morio T."/>
            <person name="Rost R."/>
            <person name="Churcher C.M."/>
            <person name="Cooper J."/>
            <person name="Haydock S."/>
            <person name="van Driessche N."/>
            <person name="Cronin A."/>
            <person name="Goodhead I."/>
            <person name="Muzny D.M."/>
            <person name="Mourier T."/>
            <person name="Pain A."/>
            <person name="Lu M."/>
            <person name="Harper D."/>
            <person name="Lindsay R."/>
            <person name="Hauser H."/>
            <person name="James K.D."/>
            <person name="Quiles M."/>
            <person name="Madan Babu M."/>
            <person name="Saito T."/>
            <person name="Buchrieser C."/>
            <person name="Wardroper A."/>
            <person name="Felder M."/>
            <person name="Thangavelu M."/>
            <person name="Johnson D."/>
            <person name="Knights A."/>
            <person name="Loulseged H."/>
            <person name="Mungall K.L."/>
            <person name="Oliver K."/>
            <person name="Price C."/>
            <person name="Quail M.A."/>
            <person name="Urushihara H."/>
            <person name="Hernandez J."/>
            <person name="Rabbinowitsch E."/>
            <person name="Steffen D."/>
            <person name="Sanders M."/>
            <person name="Ma J."/>
            <person name="Kohara Y."/>
            <person name="Sharp S."/>
            <person name="Simmonds M.N."/>
            <person name="Spiegler S."/>
            <person name="Tivey A."/>
            <person name="Sugano S."/>
            <person name="White B."/>
            <person name="Walker D."/>
            <person name="Woodward J.R."/>
            <person name="Winckler T."/>
            <person name="Tanaka Y."/>
            <person name="Shaulsky G."/>
            <person name="Schleicher M."/>
            <person name="Weinstock G.M."/>
            <person name="Rosenthal A."/>
            <person name="Cox E.C."/>
            <person name="Chisholm R.L."/>
            <person name="Gibbs R.A."/>
            <person name="Loomis W.F."/>
            <person name="Platzer M."/>
            <person name="Kay R.R."/>
            <person name="Williams J.G."/>
            <person name="Dear P.H."/>
            <person name="Noegel A.A."/>
            <person name="Barrell B.G."/>
            <person name="Kuspa A."/>
        </authorList>
    </citation>
    <scope>NUCLEOTIDE SEQUENCE [LARGE SCALE GENOMIC DNA]</scope>
    <source>
        <strain>AX4</strain>
    </source>
</reference>
<reference key="3">
    <citation type="journal article" date="2011" name="Semin. Cell Dev. Biol.">
        <title>Functional analyses of lissencephaly-related proteins in Dictyostelium.</title>
        <authorList>
            <person name="Meyer I."/>
            <person name="Kuhnert O."/>
            <person name="Graf R."/>
        </authorList>
    </citation>
    <scope>FUNCTION</scope>
    <scope>SUBCELLULAR LOCATION</scope>
    <scope>INTERACTION WITH LIS1</scope>
</reference>
<proteinExistence type="evidence at protein level"/>
<keyword id="KW-0963">Cytoplasm</keyword>
<keyword id="KW-0206">Cytoskeleton</keyword>
<keyword id="KW-1185">Reference proteome</keyword>
<keyword id="KW-0677">Repeat</keyword>
<feature type="chain" id="PRO_0000403668" description="Protein doublecortin">
    <location>
        <begin position="1"/>
        <end position="308"/>
    </location>
</feature>
<feature type="domain" description="Doublecortin 1" evidence="1">
    <location>
        <begin position="21"/>
        <end position="104"/>
    </location>
</feature>
<feature type="domain" description="Doublecortin 2" evidence="1">
    <location>
        <begin position="194"/>
        <end position="277"/>
    </location>
</feature>
<feature type="region of interest" description="Disordered" evidence="2">
    <location>
        <begin position="115"/>
        <end position="167"/>
    </location>
</feature>
<feature type="region of interest" description="Disordered" evidence="2">
    <location>
        <begin position="282"/>
        <end position="308"/>
    </location>
</feature>
<feature type="compositionally biased region" description="Low complexity" evidence="2">
    <location>
        <begin position="141"/>
        <end position="167"/>
    </location>
</feature>
<feature type="compositionally biased region" description="Low complexity" evidence="2">
    <location>
        <begin position="291"/>
        <end position="300"/>
    </location>
</feature>